<feature type="chain" id="PRO_0000080259" description="Chitobiosyldiphosphodolichol beta-mannosyltransferase">
    <location>
        <begin position="1"/>
        <end position="449"/>
    </location>
</feature>
<feature type="topological domain" description="Lumenal" evidence="4">
    <location>
        <begin position="1"/>
        <end position="7"/>
    </location>
</feature>
<feature type="transmembrane region" description="Helical" evidence="1">
    <location>
        <begin position="8"/>
        <end position="28"/>
    </location>
</feature>
<feature type="topological domain" description="Cytoplasmic" evidence="4">
    <location>
        <begin position="29"/>
        <end position="104"/>
    </location>
</feature>
<feature type="intramembrane region" description="Helical" evidence="1">
    <location>
        <begin position="105"/>
        <end position="125"/>
    </location>
</feature>
<feature type="topological domain" description="Cytoplasmic" evidence="4">
    <location>
        <begin position="126"/>
        <end position="449"/>
    </location>
</feature>
<feature type="region of interest" description="Required for oligomerization" evidence="3">
    <location>
        <begin position="435"/>
        <end position="449"/>
    </location>
</feature>
<feature type="short sequence motif" description="Dolichol recognition" evidence="1">
    <location>
        <begin position="21"/>
        <end position="32"/>
    </location>
</feature>
<feature type="mutagenesis site" description="Abolishes enzymatic activity." evidence="3">
    <original>E</original>
    <variation>K</variation>
    <location>
        <position position="278"/>
    </location>
</feature>
<feature type="mutagenesis site" description="Abolishes enzymatic activity." evidence="3">
    <original>G</original>
    <variation>D</variation>
    <location>
        <position position="310"/>
    </location>
</feature>
<feature type="mutagenesis site" description="Abolishes enzymatic activity." evidence="3">
    <original>H</original>
    <variation>Q</variation>
    <location>
        <position position="356"/>
    </location>
</feature>
<feature type="mutagenesis site" description="No effect on enzymatic activity." evidence="3">
    <original>D</original>
    <variation>A</variation>
    <location>
        <position position="363"/>
    </location>
</feature>
<feature type="mutagenesis site" description="No effect on enzymatic activity." evidence="3">
    <original>D</original>
    <variation>A</variation>
    <location>
        <position position="370"/>
    </location>
</feature>
<sequence length="449" mass="51929">MFLEIPRWLLALIILYLSIPLVVYYVIPYLFYGNKSTKKRIIIFVLGDVGHSPRICYHAISFSKLGWQVELCGYVEDTLPKIISSDPNITVHHMSNLKRKGGGTSVIFMVKKVLFQVLSIFKLLWELRGSDYILVQNPPSIPILPIAVLYKLTGCKLIIDWHNLAYSILQLKFKGNFYHPLVLISYMVEMIFSKFADYNLTVTEAMRKYLIQSFHLNPKRCAVLYDRPASQFQPLAGDISRQKALTTKAFIKNYIRDDFDTEKGDKIIVTSTSFTPDEDIGILLGALKIYENSYVKFDSSLPKILCFITGKGPLKEKYMKQVEEYDWKRCQIEFVWLSAEDYPKLLQLCDYGVSLHTSSSGLDLPMKILDMFGSGLPVIAMNYPVLDELVQHNVNGLKFVDRRELHESLIFAMKDADLYQKLKKNVTQEAENRWQSNWERTMRDLKLIH</sequence>
<comment type="function">
    <text evidence="3 4">Participates in the formation of the lipid-linked precursor oligosaccharide for N-glycosylation. Involved in assembling the dolichol-pyrophosphate-GlcNAc(2)-Man(5) intermediate on the cytoplasmic surface of the ER.</text>
</comment>
<comment type="catalytic activity">
    <reaction evidence="3 4">
        <text>an N,N'-diacetylchitobiosyl-diphospho-di-trans,poly-cis-dolichol + GDP-alpha-D-mannose = a beta-D-Man-(1-&gt;4)-beta-D-GlcNAc-(1-&gt;4)-alpha-D-GlcNAc-diphospho-di-trans,poly-cis-dolichol + GDP + H(+)</text>
        <dbReference type="Rhea" id="RHEA:13865"/>
        <dbReference type="Rhea" id="RHEA-COMP:19510"/>
        <dbReference type="Rhea" id="RHEA-COMP:19511"/>
        <dbReference type="ChEBI" id="CHEBI:15378"/>
        <dbReference type="ChEBI" id="CHEBI:57269"/>
        <dbReference type="ChEBI" id="CHEBI:57527"/>
        <dbReference type="ChEBI" id="CHEBI:58189"/>
        <dbReference type="ChEBI" id="CHEBI:58472"/>
        <dbReference type="EC" id="2.4.1.142"/>
    </reaction>
    <physiologicalReaction direction="left-to-right" evidence="6">
        <dbReference type="Rhea" id="RHEA:13866"/>
    </physiologicalReaction>
</comment>
<comment type="pathway">
    <text evidence="3 4">Protein modification; protein glycosylation.</text>
</comment>
<comment type="subunit">
    <text evidence="3">Homodimer (PubMed:15044395). ALG1 forms mannosyltransferases (MT) heteromeric complexes with either ALG2 or ALG11.</text>
</comment>
<comment type="interaction">
    <interactant intactId="EBI-2206309">
        <id>P16661</id>
    </interactant>
    <interactant intactId="EBI-2497">
        <id>P53954</id>
        <label>ALG11</label>
    </interactant>
    <organismsDiffer>false</organismsDiffer>
    <experiments>2</experiments>
</comment>
<comment type="interaction">
    <interactant intactId="EBI-2206309">
        <id>P16661</id>
    </interactant>
    <interactant intactId="EBI-2459">
        <id>P43636</id>
        <label>ALG2</label>
    </interactant>
    <organismsDiffer>false</organismsDiffer>
    <experiments>2</experiments>
</comment>
<comment type="subcellular location">
    <subcellularLocation>
        <location evidence="4">Endoplasmic reticulum membrane</location>
        <topology evidence="4">Single-pass membrane protein</topology>
    </subcellularLocation>
</comment>
<comment type="miscellaneous">
    <text evidence="2">Present with 1890 molecules/cell in log phase SD medium.</text>
</comment>
<comment type="similarity">
    <text evidence="5">Belongs to the glycosyltransferase group 1 family. Glycosyltransferase 33 subfamily.</text>
</comment>
<keyword id="KW-0256">Endoplasmic reticulum</keyword>
<keyword id="KW-0328">Glycosyltransferase</keyword>
<keyword id="KW-0472">Membrane</keyword>
<keyword id="KW-1185">Reference proteome</keyword>
<keyword id="KW-0735">Signal-anchor</keyword>
<keyword id="KW-0808">Transferase</keyword>
<keyword id="KW-0812">Transmembrane</keyword>
<keyword id="KW-1133">Transmembrane helix</keyword>
<dbReference type="EC" id="2.4.1.142" evidence="3"/>
<dbReference type="EMBL" id="J05416">
    <property type="protein sequence ID" value="AAA66322.1"/>
    <property type="molecule type" value="Genomic_DNA"/>
</dbReference>
<dbReference type="EMBL" id="X78993">
    <property type="protein sequence ID" value="CAA55613.1"/>
    <property type="molecule type" value="Genomic_DNA"/>
</dbReference>
<dbReference type="EMBL" id="Z35979">
    <property type="protein sequence ID" value="CAA85067.1"/>
    <property type="molecule type" value="Genomic_DNA"/>
</dbReference>
<dbReference type="EMBL" id="BK006936">
    <property type="protein sequence ID" value="DAA07229.1"/>
    <property type="molecule type" value="Genomic_DNA"/>
</dbReference>
<dbReference type="PIR" id="A35762">
    <property type="entry name" value="A35762"/>
</dbReference>
<dbReference type="RefSeq" id="NP_009668.3">
    <property type="nucleotide sequence ID" value="NM_001178458.3"/>
</dbReference>
<dbReference type="SMR" id="P16661"/>
<dbReference type="BioGRID" id="32814">
    <property type="interactions" value="364"/>
</dbReference>
<dbReference type="DIP" id="DIP-7371N"/>
<dbReference type="FunCoup" id="P16661">
    <property type="interactions" value="1046"/>
</dbReference>
<dbReference type="IntAct" id="P16661">
    <property type="interactions" value="16"/>
</dbReference>
<dbReference type="MINT" id="P16661"/>
<dbReference type="STRING" id="4932.YBR110W"/>
<dbReference type="CAZy" id="GT33">
    <property type="family name" value="Glycosyltransferase Family 33"/>
</dbReference>
<dbReference type="GlyCosmos" id="P16661">
    <property type="glycosylation" value="3 sites, No reported glycans"/>
</dbReference>
<dbReference type="iPTMnet" id="P16661"/>
<dbReference type="PaxDb" id="4932-YBR110W"/>
<dbReference type="PeptideAtlas" id="P16661"/>
<dbReference type="EnsemblFungi" id="YBR110W_mRNA">
    <property type="protein sequence ID" value="YBR110W"/>
    <property type="gene ID" value="YBR110W"/>
</dbReference>
<dbReference type="GeneID" id="852407"/>
<dbReference type="KEGG" id="sce:YBR110W"/>
<dbReference type="AGR" id="SGD:S000000314"/>
<dbReference type="SGD" id="S000000314">
    <property type="gene designation" value="ALG1"/>
</dbReference>
<dbReference type="VEuPathDB" id="FungiDB:YBR110W"/>
<dbReference type="eggNOG" id="KOG2941">
    <property type="taxonomic scope" value="Eukaryota"/>
</dbReference>
<dbReference type="GeneTree" id="ENSGT00390000008647"/>
<dbReference type="HOGENOM" id="CLU_012079_0_0_1"/>
<dbReference type="InParanoid" id="P16661"/>
<dbReference type="OMA" id="CKLIIDW"/>
<dbReference type="OrthoDB" id="614844at2759"/>
<dbReference type="BioCyc" id="MetaCyc:YBR110W-MONOMER"/>
<dbReference type="BioCyc" id="YEAST:YBR110W-MONOMER"/>
<dbReference type="BRENDA" id="2.4.1.142">
    <property type="organism ID" value="984"/>
</dbReference>
<dbReference type="Reactome" id="R-SCE-446193">
    <property type="pathway name" value="Biosynthesis of the N-glycan precursor (dolichol lipid-linked oligosaccharide, LLO) and transfer to a nascent protein"/>
</dbReference>
<dbReference type="UniPathway" id="UPA00378"/>
<dbReference type="BioGRID-ORCS" id="852407">
    <property type="hits" value="6 hits in 10 CRISPR screens"/>
</dbReference>
<dbReference type="PRO" id="PR:P16661"/>
<dbReference type="Proteomes" id="UP000002311">
    <property type="component" value="Chromosome II"/>
</dbReference>
<dbReference type="RNAct" id="P16661">
    <property type="molecule type" value="protein"/>
</dbReference>
<dbReference type="GO" id="GO:0098554">
    <property type="term" value="C:cytoplasmic side of endoplasmic reticulum membrane"/>
    <property type="evidence" value="ECO:0000314"/>
    <property type="project" value="UniProtKB"/>
</dbReference>
<dbReference type="GO" id="GO:0005783">
    <property type="term" value="C:endoplasmic reticulum"/>
    <property type="evidence" value="ECO:0000353"/>
    <property type="project" value="SGD"/>
</dbReference>
<dbReference type="GO" id="GO:0019187">
    <property type="term" value="F:beta-1,4-mannosyltransferase activity"/>
    <property type="evidence" value="ECO:0000314"/>
    <property type="project" value="SGD"/>
</dbReference>
<dbReference type="GO" id="GO:0004578">
    <property type="term" value="F:chitobiosyldiphosphodolichol beta-mannosyltransferase activity"/>
    <property type="evidence" value="ECO:0000314"/>
    <property type="project" value="UniProtKB"/>
</dbReference>
<dbReference type="GO" id="GO:0000030">
    <property type="term" value="F:mannosyltransferase activity"/>
    <property type="evidence" value="ECO:0000318"/>
    <property type="project" value="GO_Central"/>
</dbReference>
<dbReference type="GO" id="GO:0006488">
    <property type="term" value="P:dolichol-linked oligosaccharide biosynthetic process"/>
    <property type="evidence" value="ECO:0000314"/>
    <property type="project" value="UniProtKB"/>
</dbReference>
<dbReference type="GO" id="GO:0006486">
    <property type="term" value="P:protein glycosylation"/>
    <property type="evidence" value="ECO:0000318"/>
    <property type="project" value="GO_Central"/>
</dbReference>
<dbReference type="GO" id="GO:0006487">
    <property type="term" value="P:protein N-linked glycosylation"/>
    <property type="evidence" value="ECO:0000315"/>
    <property type="project" value="SGD"/>
</dbReference>
<dbReference type="CDD" id="cd03816">
    <property type="entry name" value="GT33_ALG1-like"/>
    <property type="match status" value="1"/>
</dbReference>
<dbReference type="FunFam" id="3.40.50.2000:FF:000216">
    <property type="entry name" value="Chitobiosyldiphosphodolichol beta-mannosyltransferase"/>
    <property type="match status" value="1"/>
</dbReference>
<dbReference type="Gene3D" id="3.40.50.2000">
    <property type="entry name" value="Glycogen Phosphorylase B"/>
    <property type="match status" value="2"/>
</dbReference>
<dbReference type="InterPro" id="IPR026051">
    <property type="entry name" value="ALG1-like"/>
</dbReference>
<dbReference type="InterPro" id="IPR001296">
    <property type="entry name" value="Glyco_trans_1"/>
</dbReference>
<dbReference type="PANTHER" id="PTHR13036">
    <property type="entry name" value="BETA1,4 MANNOSYLTRANSFERASE"/>
    <property type="match status" value="1"/>
</dbReference>
<dbReference type="PANTHER" id="PTHR13036:SF0">
    <property type="entry name" value="CHITOBIOSYLDIPHOSPHODOLICHOL BETA-MANNOSYLTRANSFERASE"/>
    <property type="match status" value="1"/>
</dbReference>
<dbReference type="Pfam" id="PF00534">
    <property type="entry name" value="Glycos_transf_1"/>
    <property type="match status" value="1"/>
</dbReference>
<dbReference type="SUPFAM" id="SSF53756">
    <property type="entry name" value="UDP-Glycosyltransferase/glycogen phosphorylase"/>
    <property type="match status" value="1"/>
</dbReference>
<protein>
    <recommendedName>
        <fullName evidence="6">Chitobiosyldiphosphodolichol beta-mannosyltransferase</fullName>
        <ecNumber evidence="3">2.4.1.142</ecNumber>
    </recommendedName>
    <alternativeName>
        <fullName>Asparagine-linked glycosylation protein 1</fullName>
    </alternativeName>
    <alternativeName>
        <fullName>Beta-1,4-mannosyltransferase</fullName>
    </alternativeName>
    <alternativeName>
        <fullName>GDP-Man:GlcNAc2-PP-dolichol mannosyltransferase</fullName>
    </alternativeName>
    <alternativeName>
        <fullName>GDP-mannose-dolichol diphosphochitobiose mannosyltransferase</fullName>
    </alternativeName>
</protein>
<organism>
    <name type="scientific">Saccharomyces cerevisiae (strain ATCC 204508 / S288c)</name>
    <name type="common">Baker's yeast</name>
    <dbReference type="NCBI Taxonomy" id="559292"/>
    <lineage>
        <taxon>Eukaryota</taxon>
        <taxon>Fungi</taxon>
        <taxon>Dikarya</taxon>
        <taxon>Ascomycota</taxon>
        <taxon>Saccharomycotina</taxon>
        <taxon>Saccharomycetes</taxon>
        <taxon>Saccharomycetales</taxon>
        <taxon>Saccharomycetaceae</taxon>
        <taxon>Saccharomyces</taxon>
    </lineage>
</organism>
<reference key="1">
    <citation type="journal article" date="1990" name="J. Biol. Chem.">
        <title>The sequence and transcript heterogeneity of the yeast gene ALG1, an essential mannosyltransferase involved in N-glycosylation.</title>
        <authorList>
            <person name="Albright C.F."/>
            <person name="Robbins P.W."/>
        </authorList>
    </citation>
    <scope>NUCLEOTIDE SEQUENCE [GENOMIC DNA]</scope>
</reference>
<reference key="2">
    <citation type="journal article" date="1994" name="Yeast">
        <title>Analysis of a 70 kb region on the right arm of yeast chromosome II.</title>
        <authorList>
            <person name="Mannhaupt G."/>
            <person name="Stucka R."/>
            <person name="Ehnle S."/>
            <person name="Vetter I."/>
            <person name="Feldmann H."/>
        </authorList>
    </citation>
    <scope>NUCLEOTIDE SEQUENCE [GENOMIC DNA]</scope>
    <source>
        <strain>ATCC 204508 / S288c</strain>
    </source>
</reference>
<reference key="3">
    <citation type="journal article" date="1994" name="EMBO J.">
        <title>Complete DNA sequence of yeast chromosome II.</title>
        <authorList>
            <person name="Feldmann H."/>
            <person name="Aigle M."/>
            <person name="Aljinovic G."/>
            <person name="Andre B."/>
            <person name="Baclet M.C."/>
            <person name="Barthe C."/>
            <person name="Baur A."/>
            <person name="Becam A.-M."/>
            <person name="Biteau N."/>
            <person name="Boles E."/>
            <person name="Brandt T."/>
            <person name="Brendel M."/>
            <person name="Brueckner M."/>
            <person name="Bussereau F."/>
            <person name="Christiansen C."/>
            <person name="Contreras R."/>
            <person name="Crouzet M."/>
            <person name="Cziepluch C."/>
            <person name="Demolis N."/>
            <person name="Delaveau T."/>
            <person name="Doignon F."/>
            <person name="Domdey H."/>
            <person name="Duesterhus S."/>
            <person name="Dubois E."/>
            <person name="Dujon B."/>
            <person name="El Bakkoury M."/>
            <person name="Entian K.-D."/>
            <person name="Feuermann M."/>
            <person name="Fiers W."/>
            <person name="Fobo G.M."/>
            <person name="Fritz C."/>
            <person name="Gassenhuber J."/>
            <person name="Glansdorff N."/>
            <person name="Goffeau A."/>
            <person name="Grivell L.A."/>
            <person name="de Haan M."/>
            <person name="Hein C."/>
            <person name="Herbert C.J."/>
            <person name="Hollenberg C.P."/>
            <person name="Holmstroem K."/>
            <person name="Jacq C."/>
            <person name="Jacquet M."/>
            <person name="Jauniaux J.-C."/>
            <person name="Jonniaux J.-L."/>
            <person name="Kallesoee T."/>
            <person name="Kiesau P."/>
            <person name="Kirchrath L."/>
            <person name="Koetter P."/>
            <person name="Korol S."/>
            <person name="Liebl S."/>
            <person name="Logghe M."/>
            <person name="Lohan A.J.E."/>
            <person name="Louis E.J."/>
            <person name="Li Z.Y."/>
            <person name="Maat M.J."/>
            <person name="Mallet L."/>
            <person name="Mannhaupt G."/>
            <person name="Messenguy F."/>
            <person name="Miosga T."/>
            <person name="Molemans F."/>
            <person name="Mueller S."/>
            <person name="Nasr F."/>
            <person name="Obermaier B."/>
            <person name="Perea J."/>
            <person name="Pierard A."/>
            <person name="Piravandi E."/>
            <person name="Pohl F.M."/>
            <person name="Pohl T.M."/>
            <person name="Potier S."/>
            <person name="Proft M."/>
            <person name="Purnelle B."/>
            <person name="Ramezani Rad M."/>
            <person name="Rieger M."/>
            <person name="Rose M."/>
            <person name="Schaaff-Gerstenschlaeger I."/>
            <person name="Scherens B."/>
            <person name="Schwarzlose C."/>
            <person name="Skala J."/>
            <person name="Slonimski P.P."/>
            <person name="Smits P.H.M."/>
            <person name="Souciet J.-L."/>
            <person name="Steensma H.Y."/>
            <person name="Stucka R."/>
            <person name="Urrestarazu L.A."/>
            <person name="van der Aart Q.J.M."/>
            <person name="Van Dyck L."/>
            <person name="Vassarotti A."/>
            <person name="Vetter I."/>
            <person name="Vierendeels F."/>
            <person name="Vissers S."/>
            <person name="Wagner G."/>
            <person name="de Wergifosse P."/>
            <person name="Wolfe K.H."/>
            <person name="Zagulski M."/>
            <person name="Zimmermann F.K."/>
            <person name="Mewes H.-W."/>
            <person name="Kleine K."/>
        </authorList>
    </citation>
    <scope>NUCLEOTIDE SEQUENCE [LARGE SCALE GENOMIC DNA]</scope>
    <source>
        <strain>ATCC 204508 / S288c</strain>
    </source>
</reference>
<reference key="4">
    <citation type="journal article" date="2014" name="G3 (Bethesda)">
        <title>The reference genome sequence of Saccharomyces cerevisiae: Then and now.</title>
        <authorList>
            <person name="Engel S.R."/>
            <person name="Dietrich F.S."/>
            <person name="Fisk D.G."/>
            <person name="Binkley G."/>
            <person name="Balakrishnan R."/>
            <person name="Costanzo M.C."/>
            <person name="Dwight S.S."/>
            <person name="Hitz B.C."/>
            <person name="Karra K."/>
            <person name="Nash R.S."/>
            <person name="Weng S."/>
            <person name="Wong E.D."/>
            <person name="Lloyd P."/>
            <person name="Skrzypek M.S."/>
            <person name="Miyasato S.R."/>
            <person name="Simison M."/>
            <person name="Cherry J.M."/>
        </authorList>
    </citation>
    <scope>GENOME REANNOTATION</scope>
    <source>
        <strain>ATCC 204508 / S288c</strain>
    </source>
</reference>
<reference key="5">
    <citation type="journal article" date="2003" name="Nature">
        <title>Global analysis of protein localization in budding yeast.</title>
        <authorList>
            <person name="Huh W.-K."/>
            <person name="Falvo J.V."/>
            <person name="Gerke L.C."/>
            <person name="Carroll A.S."/>
            <person name="Howson R.W."/>
            <person name="Weissman J.S."/>
            <person name="O'Shea E.K."/>
        </authorList>
    </citation>
    <scope>SUBCELLULAR LOCATION [LARGE SCALE ANALYSIS]</scope>
</reference>
<reference key="6">
    <citation type="journal article" date="2003" name="Nature">
        <title>Global analysis of protein expression in yeast.</title>
        <authorList>
            <person name="Ghaemmaghami S."/>
            <person name="Huh W.-K."/>
            <person name="Bower K."/>
            <person name="Howson R.W."/>
            <person name="Belle A."/>
            <person name="Dephoure N."/>
            <person name="O'Shea E.K."/>
            <person name="Weissman J.S."/>
        </authorList>
    </citation>
    <scope>LEVEL OF PROTEIN EXPRESSION [LARGE SCALE ANALYSIS]</scope>
</reference>
<reference key="7">
    <citation type="journal article" date="2004" name="Glycobiology">
        <title>Physical interactions between the Alg1, Alg2, and Alg11 mannosyltransferases of the endoplasmic reticulum.</title>
        <authorList>
            <person name="Gao X.-D."/>
            <person name="Nishikawa A."/>
            <person name="Dean N."/>
        </authorList>
    </citation>
    <scope>FUNCTION</scope>
    <scope>CATALYTIC ACTIVITY</scope>
    <scope>PATHWAY</scope>
    <scope>OLIGOMERIZATION</scope>
    <scope>INTERACTION WITH ALG2 AND ALG11</scope>
    <scope>SUBCELLULAR LOCATION</scope>
    <scope>MUTAGENESIS OF GLU-278; GLY-310; HIS-356; ASP-363 AND ASP-370</scope>
    <scope>REGION</scope>
</reference>
<reference key="8">
    <citation type="journal article" date="2018" name="Glycobiology">
        <title>Structural and functional analysis of Alg1 beta-1,4 mannosyltransferase reveals the physiological importance of its membrane topology.</title>
        <authorList>
            <person name="Xu X.X."/>
            <person name="Li S.T."/>
            <person name="Wang N."/>
            <person name="Kitajima T."/>
            <person name="Yoko-O T."/>
            <person name="Fujita M."/>
            <person name="Nakanishi H."/>
            <person name="Gao X.D."/>
        </authorList>
    </citation>
    <scope>FUNCTION</scope>
    <scope>CATALYTIC ACTIVITY</scope>
    <scope>PATHWAY</scope>
    <scope>SUBCELLULAR LOCATION</scope>
    <scope>TOPOLOGY</scope>
</reference>
<accession>P16661</accession>
<accession>D6VQA9</accession>
<gene>
    <name type="primary">ALG1</name>
    <name type="ordered locus">YBR110W</name>
    <name type="ORF">YBR0906</name>
</gene>
<proteinExistence type="evidence at protein level"/>
<name>ALG1_YEAST</name>
<evidence type="ECO:0000255" key="1"/>
<evidence type="ECO:0000269" key="2">
    <source>
    </source>
</evidence>
<evidence type="ECO:0000269" key="3">
    <source>
    </source>
</evidence>
<evidence type="ECO:0000269" key="4">
    <source>
    </source>
</evidence>
<evidence type="ECO:0000305" key="5"/>
<evidence type="ECO:0000305" key="6">
    <source>
    </source>
</evidence>